<keyword id="KW-0004">4Fe-4S</keyword>
<keyword id="KW-0007">Acetylation</keyword>
<keyword id="KW-0051">Antiviral defense</keyword>
<keyword id="KW-0065">Atherosclerosis</keyword>
<keyword id="KW-0256">Endoplasmic reticulum</keyword>
<keyword id="KW-0333">Golgi apparatus</keyword>
<keyword id="KW-0945">Host-virus interaction</keyword>
<keyword id="KW-0391">Immunity</keyword>
<keyword id="KW-0399">Innate immunity</keyword>
<keyword id="KW-0408">Iron</keyword>
<keyword id="KW-0411">Iron-sulfur</keyword>
<keyword id="KW-1017">Isopeptide bond</keyword>
<keyword id="KW-0551">Lipid droplet</keyword>
<keyword id="KW-0456">Lyase</keyword>
<keyword id="KW-0472">Membrane</keyword>
<keyword id="KW-0479">Metal-binding</keyword>
<keyword id="KW-0496">Mitochondrion</keyword>
<keyword id="KW-0999">Mitochondrion inner membrane</keyword>
<keyword id="KW-1000">Mitochondrion outer membrane</keyword>
<keyword id="KW-1267">Proteomics identification</keyword>
<keyword id="KW-1185">Reference proteome</keyword>
<keyword id="KW-0949">S-adenosyl-L-methionine</keyword>
<keyword id="KW-0832">Ubl conjugation</keyword>
<evidence type="ECO:0000255" key="1">
    <source>
        <dbReference type="PROSITE-ProRule" id="PRU01266"/>
    </source>
</evidence>
<evidence type="ECO:0000269" key="2">
    <source>
    </source>
</evidence>
<evidence type="ECO:0000269" key="3">
    <source>
    </source>
</evidence>
<evidence type="ECO:0000269" key="4">
    <source>
    </source>
</evidence>
<evidence type="ECO:0000269" key="5">
    <source>
    </source>
</evidence>
<evidence type="ECO:0000269" key="6">
    <source>
    </source>
</evidence>
<evidence type="ECO:0000269" key="7">
    <source>
    </source>
</evidence>
<evidence type="ECO:0000269" key="8">
    <source>
    </source>
</evidence>
<evidence type="ECO:0000269" key="9">
    <source>
    </source>
</evidence>
<evidence type="ECO:0000269" key="10">
    <source>
    </source>
</evidence>
<evidence type="ECO:0000269" key="11">
    <source>
    </source>
</evidence>
<evidence type="ECO:0000269" key="12">
    <source>
    </source>
</evidence>
<evidence type="ECO:0000269" key="13">
    <source>
    </source>
</evidence>
<evidence type="ECO:0000269" key="14">
    <source>
    </source>
</evidence>
<evidence type="ECO:0000269" key="15">
    <source>
    </source>
</evidence>
<evidence type="ECO:0000269" key="16">
    <source>
    </source>
</evidence>
<evidence type="ECO:0000269" key="17">
    <source>
    </source>
</evidence>
<evidence type="ECO:0000269" key="18">
    <source>
    </source>
</evidence>
<evidence type="ECO:0000269" key="19">
    <source>
    </source>
</evidence>
<evidence type="ECO:0000269" key="20">
    <source>
    </source>
</evidence>
<evidence type="ECO:0000269" key="21">
    <source>
    </source>
</evidence>
<evidence type="ECO:0000269" key="22">
    <source>
    </source>
</evidence>
<evidence type="ECO:0000269" key="23">
    <source>
    </source>
</evidence>
<evidence type="ECO:0000303" key="24">
    <source>
    </source>
</evidence>
<evidence type="ECO:0000303" key="25">
    <source>
    </source>
</evidence>
<evidence type="ECO:0000303" key="26">
    <source>
    </source>
</evidence>
<evidence type="ECO:0000303" key="27">
    <source>
    </source>
</evidence>
<evidence type="ECO:0000303" key="28">
    <source>
    </source>
</evidence>
<evidence type="ECO:0000305" key="29"/>
<evidence type="ECO:0000305" key="30">
    <source>
    </source>
</evidence>
<evidence type="ECO:0000312" key="31">
    <source>
        <dbReference type="EMBL" id="AAH17969.1"/>
    </source>
</evidence>
<evidence type="ECO:0000312" key="32">
    <source>
        <dbReference type="EMBL" id="AAL50053.1"/>
    </source>
</evidence>
<evidence type="ECO:0000312" key="33">
    <source>
        <dbReference type="EMBL" id="AAY14802.1"/>
    </source>
</evidence>
<evidence type="ECO:0000312" key="34">
    <source>
        <dbReference type="EMBL" id="EAX01034.1"/>
    </source>
</evidence>
<evidence type="ECO:0000312" key="35">
    <source>
        <dbReference type="HGNC" id="HGNC:30908"/>
    </source>
</evidence>
<gene>
    <name evidence="34 35" type="primary">RSAD2</name>
    <name evidence="28 33" type="synonym">CIG5</name>
</gene>
<reference evidence="29" key="1">
    <citation type="journal article" date="1997" name="Proc. Natl. Acad. Sci. U.S.A.">
        <title>Use of differential display analysis to assess the effect of human cytomegalovirus infection on the accumulation of cellular RNAs: induction of interferon-responsive RNAs.</title>
        <authorList>
            <person name="Zhu H."/>
            <person name="Cong J.-P."/>
            <person name="Shenk T."/>
        </authorList>
    </citation>
    <scope>NUCLEOTIDE SEQUENCE [MRNA]</scope>
    <scope>INDUCTION</scope>
    <source>
        <tissue evidence="23">Foreskin fibroblast</tissue>
    </source>
</reference>
<reference evidence="29 32" key="2">
    <citation type="journal article" date="2001" name="Proc. Natl. Acad. Sci. U.S.A.">
        <title>Viperin (cig5), an IFN-inducible antiviral protein directly induced by human cytomegalovirus.</title>
        <authorList>
            <person name="Chin K.-C."/>
            <person name="Cresswell P."/>
        </authorList>
    </citation>
    <scope>NUCLEOTIDE SEQUENCE [MRNA]</scope>
    <scope>FUNCTION</scope>
    <scope>SUBCELLULAR LOCATION</scope>
    <scope>INDUCTION</scope>
    <source>
        <tissue evidence="2">Macrophage</tissue>
    </source>
</reference>
<reference evidence="33" key="3">
    <citation type="journal article" date="2005" name="Nature">
        <title>Generation and annotation of the DNA sequences of human chromosomes 2 and 4.</title>
        <authorList>
            <person name="Hillier L.W."/>
            <person name="Graves T.A."/>
            <person name="Fulton R.S."/>
            <person name="Fulton L.A."/>
            <person name="Pepin K.H."/>
            <person name="Minx P."/>
            <person name="Wagner-McPherson C."/>
            <person name="Layman D."/>
            <person name="Wylie K."/>
            <person name="Sekhon M."/>
            <person name="Becker M.C."/>
            <person name="Fewell G.A."/>
            <person name="Delehaunty K.D."/>
            <person name="Miner T.L."/>
            <person name="Nash W.E."/>
            <person name="Kremitzki C."/>
            <person name="Oddy L."/>
            <person name="Du H."/>
            <person name="Sun H."/>
            <person name="Bradshaw-Cordum H."/>
            <person name="Ali J."/>
            <person name="Carter J."/>
            <person name="Cordes M."/>
            <person name="Harris A."/>
            <person name="Isak A."/>
            <person name="van Brunt A."/>
            <person name="Nguyen C."/>
            <person name="Du F."/>
            <person name="Courtney L."/>
            <person name="Kalicki J."/>
            <person name="Ozersky P."/>
            <person name="Abbott S."/>
            <person name="Armstrong J."/>
            <person name="Belter E.A."/>
            <person name="Caruso L."/>
            <person name="Cedroni M."/>
            <person name="Cotton M."/>
            <person name="Davidson T."/>
            <person name="Desai A."/>
            <person name="Elliott G."/>
            <person name="Erb T."/>
            <person name="Fronick C."/>
            <person name="Gaige T."/>
            <person name="Haakenson W."/>
            <person name="Haglund K."/>
            <person name="Holmes A."/>
            <person name="Harkins R."/>
            <person name="Kim K."/>
            <person name="Kruchowski S.S."/>
            <person name="Strong C.M."/>
            <person name="Grewal N."/>
            <person name="Goyea E."/>
            <person name="Hou S."/>
            <person name="Levy A."/>
            <person name="Martinka S."/>
            <person name="Mead K."/>
            <person name="McLellan M.D."/>
            <person name="Meyer R."/>
            <person name="Randall-Maher J."/>
            <person name="Tomlinson C."/>
            <person name="Dauphin-Kohlberg S."/>
            <person name="Kozlowicz-Reilly A."/>
            <person name="Shah N."/>
            <person name="Swearengen-Shahid S."/>
            <person name="Snider J."/>
            <person name="Strong J.T."/>
            <person name="Thompson J."/>
            <person name="Yoakum M."/>
            <person name="Leonard S."/>
            <person name="Pearman C."/>
            <person name="Trani L."/>
            <person name="Radionenko M."/>
            <person name="Waligorski J.E."/>
            <person name="Wang C."/>
            <person name="Rock S.M."/>
            <person name="Tin-Wollam A.-M."/>
            <person name="Maupin R."/>
            <person name="Latreille P."/>
            <person name="Wendl M.C."/>
            <person name="Yang S.-P."/>
            <person name="Pohl C."/>
            <person name="Wallis J.W."/>
            <person name="Spieth J."/>
            <person name="Bieri T.A."/>
            <person name="Berkowicz N."/>
            <person name="Nelson J.O."/>
            <person name="Osborne J."/>
            <person name="Ding L."/>
            <person name="Meyer R."/>
            <person name="Sabo A."/>
            <person name="Shotland Y."/>
            <person name="Sinha P."/>
            <person name="Wohldmann P.E."/>
            <person name="Cook L.L."/>
            <person name="Hickenbotham M.T."/>
            <person name="Eldred J."/>
            <person name="Williams D."/>
            <person name="Jones T.A."/>
            <person name="She X."/>
            <person name="Ciccarelli F.D."/>
            <person name="Izaurralde E."/>
            <person name="Taylor J."/>
            <person name="Schmutz J."/>
            <person name="Myers R.M."/>
            <person name="Cox D.R."/>
            <person name="Huang X."/>
            <person name="McPherson J.D."/>
            <person name="Mardis E.R."/>
            <person name="Clifton S.W."/>
            <person name="Warren W.C."/>
            <person name="Chinwalla A.T."/>
            <person name="Eddy S.R."/>
            <person name="Marra M.A."/>
            <person name="Ovcharenko I."/>
            <person name="Furey T.S."/>
            <person name="Miller W."/>
            <person name="Eichler E.E."/>
            <person name="Bork P."/>
            <person name="Suyama M."/>
            <person name="Torrents D."/>
            <person name="Waterston R.H."/>
            <person name="Wilson R.K."/>
        </authorList>
    </citation>
    <scope>NUCLEOTIDE SEQUENCE [LARGE SCALE GENOMIC DNA]</scope>
</reference>
<reference evidence="34" key="4">
    <citation type="submission" date="2005-09" db="EMBL/GenBank/DDBJ databases">
        <authorList>
            <person name="Mural R.J."/>
            <person name="Istrail S."/>
            <person name="Sutton G.G."/>
            <person name="Florea L."/>
            <person name="Halpern A.L."/>
            <person name="Mobarry C.M."/>
            <person name="Lippert R."/>
            <person name="Walenz B."/>
            <person name="Shatkay H."/>
            <person name="Dew I."/>
            <person name="Miller J.R."/>
            <person name="Flanigan M.J."/>
            <person name="Edwards N.J."/>
            <person name="Bolanos R."/>
            <person name="Fasulo D."/>
            <person name="Halldorsson B.V."/>
            <person name="Hannenhalli S."/>
            <person name="Turner R."/>
            <person name="Yooseph S."/>
            <person name="Lu F."/>
            <person name="Nusskern D.R."/>
            <person name="Shue B.C."/>
            <person name="Zheng X.H."/>
            <person name="Zhong F."/>
            <person name="Delcher A.L."/>
            <person name="Huson D.H."/>
            <person name="Kravitz S.A."/>
            <person name="Mouchard L."/>
            <person name="Reinert K."/>
            <person name="Remington K.A."/>
            <person name="Clark A.G."/>
            <person name="Waterman M.S."/>
            <person name="Eichler E.E."/>
            <person name="Adams M.D."/>
            <person name="Hunkapiller M.W."/>
            <person name="Myers E.W."/>
            <person name="Venter J.C."/>
        </authorList>
    </citation>
    <scope>NUCLEOTIDE SEQUENCE [LARGE SCALE GENOMIC DNA]</scope>
</reference>
<reference evidence="29 31" key="5">
    <citation type="journal article" date="2004" name="Genome Res.">
        <title>The status, quality, and expansion of the NIH full-length cDNA project: the Mammalian Gene Collection (MGC).</title>
        <authorList>
            <consortium name="The MGC Project Team"/>
        </authorList>
    </citation>
    <scope>NUCLEOTIDE SEQUENCE [LARGE SCALE MRNA]</scope>
    <scope>VARIANT ARG-42</scope>
    <source>
        <tissue evidence="31">Prostate</tissue>
    </source>
</reference>
<reference evidence="29" key="6">
    <citation type="journal article" date="2005" name="Arterioscler. Thromb. Vasc. Biol.">
        <title>The antiviral cytomegalovirus inducible gene 5/viperin is expressed in atherosclerosis and regulated by proinflammatory agents.</title>
        <authorList>
            <person name="Olofsson P.S."/>
            <person name="Jatta K."/>
            <person name="Waagsaeter D."/>
            <person name="Gredmark S."/>
            <person name="Hedin U."/>
            <person name="Paulsson-Berne G."/>
            <person name="Soederberg-Naucler C."/>
            <person name="Hansson G.K."/>
            <person name="Sirsjoe A."/>
        </authorList>
    </citation>
    <scope>UP-REGULATION IN ATHEROSCLEROSIS</scope>
</reference>
<reference evidence="29" key="7">
    <citation type="journal article" date="2005" name="Hepatology">
        <title>Analysis of ISG expression in chronic hepatitis C identifies viperin as a potential antiviral effector.</title>
        <authorList>
            <person name="Helbig K.J."/>
            <person name="Lau D.T.-Y."/>
            <person name="Semendric L."/>
            <person name="Harley H.A.J."/>
            <person name="Beard M.R."/>
        </authorList>
    </citation>
    <scope>FUNCTION</scope>
    <scope>INDUCTION</scope>
</reference>
<reference evidence="29" key="8">
    <citation type="journal article" date="2005" name="Virology">
        <title>Yellow fever virus strains Asibi and 17D-204 infect human umbilical cord endothelial cells and induce novel changes in gene expression.</title>
        <authorList>
            <person name="Khaiboullina S.F."/>
            <person name="Rizvanov A.A."/>
            <person name="Holbrook M.R."/>
            <person name="St Jeor S."/>
        </authorList>
    </citation>
    <scope>INDUCTION</scope>
</reference>
<reference evidence="29" key="9">
    <citation type="journal article" date="2006" name="J. Biol. Chem.">
        <title>Toll-like receptor-dependent and -independent viperin gene expression and counter-regulation by PRDI-binding factor-1/BLIMP1.</title>
        <authorList>
            <person name="Severa M."/>
            <person name="Coccia E.M."/>
            <person name="Fitzgerald K.A."/>
        </authorList>
    </citation>
    <scope>INDUCTION</scope>
</reference>
<reference evidence="29" key="10">
    <citation type="journal article" date="2006" name="J. Immunol.">
        <title>TLR3 ligation activates an antiviral response in human fetal astrocytes: a role for viperin/cig5.</title>
        <authorList>
            <person name="Rivieccio M.A."/>
            <person name="Suh H.-S."/>
            <person name="Zhao Y."/>
            <person name="Zhao M.-L."/>
            <person name="Chin K.-C."/>
            <person name="Lee S.C."/>
            <person name="Brosnan C.F."/>
        </authorList>
    </citation>
    <scope>FUNCTION</scope>
    <scope>SUBCELLULAR LOCATION</scope>
</reference>
<reference key="11">
    <citation type="journal article" date="2007" name="J. Virol.">
        <title>Identification and characterization of interferon-induced proteins that inhibit alphavirus replication.</title>
        <authorList>
            <person name="Zhang Y."/>
            <person name="Burke C.W."/>
            <person name="Ryman K.D."/>
            <person name="Klimstra W.B."/>
        </authorList>
    </citation>
    <scope>FUNCTION</scope>
</reference>
<reference key="12">
    <citation type="journal article" date="2007" name="Cell Host Microbe">
        <title>The interferon-inducible protein viperin inhibits influenza virus release by perturbing lipid rafts.</title>
        <authorList>
            <person name="Wang X."/>
            <person name="Hinson E.R."/>
            <person name="Cresswell P."/>
        </authorList>
    </citation>
    <scope>INTERACTION WITH FPPS</scope>
</reference>
<reference key="13">
    <citation type="journal article" date="2007" name="Cell Host Microbe">
        <title>Influenza virus not cRAFTy enough to dodge viperin.</title>
        <authorList>
            <person name="Waheed A.A."/>
            <person name="Freed E.O."/>
        </authorList>
    </citation>
    <scope>FUNCTION</scope>
</reference>
<reference key="14">
    <citation type="journal article" date="2009" name="J. Biol. Chem.">
        <title>The N-terminal amphipathic alpha-helix of viperin mediates localization to the cytosolic face of the endoplasmic reticulum and inhibits protein secretion.</title>
        <authorList>
            <person name="Hinson E.R."/>
            <person name="Cresswell P."/>
        </authorList>
    </citation>
    <scope>FUNCTION</scope>
    <scope>SUBCELLULAR LOCATION</scope>
    <scope>SUBUNIT</scope>
</reference>
<reference key="15">
    <citation type="journal article" date="2010" name="FEBS Lett.">
        <title>The antiviral protein viperin is a radical SAM enzyme.</title>
        <authorList>
            <person name="Duschene K.S."/>
            <person name="Broderick J.B."/>
        </authorList>
    </citation>
    <scope>COFACTOR</scope>
</reference>
<reference key="16">
    <citation type="journal article" date="2011" name="Science">
        <title>Human cytomegalovirus directly induces the antiviral protein viperin to enhance infectivity.</title>
        <authorList>
            <person name="Seo J.Y."/>
            <person name="Yaneva R."/>
            <person name="Hinson E.R."/>
            <person name="Cresswell P."/>
        </authorList>
    </citation>
    <scope>INTERACTION WITH HHV-5 PROTEIN UL37 (MICROBIAL INFECTION) AND HADHB</scope>
    <scope>SUBCELLULAR LOCATION</scope>
</reference>
<reference key="17">
    <citation type="journal article" date="2012" name="J. Gen. Virol.">
        <title>Viperin inhibits hepatitis C virus replication by interfering with binding of NS5A to host protein hVAP-33.</title>
        <authorList>
            <person name="Wang S."/>
            <person name="Wu X."/>
            <person name="Pan T."/>
            <person name="Song W."/>
            <person name="Wang Y."/>
            <person name="Zhang F."/>
            <person name="Yuan Z."/>
        </authorList>
    </citation>
    <scope>INTERACTION WITH VAPA</scope>
</reference>
<reference key="18">
    <citation type="journal article" date="2012" name="PLoS ONE">
        <title>The presence of the iron-sulfur motif is important for the conformational stability of the antiviral protein, Viperin.</title>
        <authorList>
            <person name="Haldar S."/>
            <person name="Paul S."/>
            <person name="Joshi N."/>
            <person name="Dasgupta A."/>
            <person name="Chattopadhyay K."/>
        </authorList>
    </citation>
    <scope>COFACTOR</scope>
    <scope>MUTAGENESIS OF CYS-83; CYS-87 AND CYS-90</scope>
</reference>
<reference key="19">
    <citation type="journal article" date="2011" name="Cell Host Microbe">
        <title>Viperin: a multifunctional, interferon-inducible protein that regulates virus replication.</title>
        <authorList>
            <person name="Seo J.Y."/>
            <person name="Yaneva R."/>
            <person name="Cresswell P."/>
        </authorList>
    </citation>
    <scope>REVIEW</scope>
</reference>
<reference key="20">
    <citation type="journal article" date="2011" name="J. Interferon Cytokine Res.">
        <title>The interferon inducible gene: Viperin.</title>
        <authorList>
            <person name="Fitzgerald K.A."/>
        </authorList>
    </citation>
    <scope>REVIEW</scope>
</reference>
<reference key="21">
    <citation type="journal article" date="2012" name="Microbes Infect.">
        <title>Viperin, a key player in the antiviral response.</title>
        <authorList>
            <person name="Mattijssen S."/>
            <person name="Pruijn G.J."/>
        </authorList>
    </citation>
    <scope>REVIEW</scope>
</reference>
<reference key="22">
    <citation type="journal article" date="2018" name="Nature">
        <title>A naturally occurring antiviral ribonucleotide encoded by the human genome.</title>
        <authorList>
            <person name="Gizzi A.S."/>
            <person name="Grove T.L."/>
            <person name="Arnold J.J."/>
            <person name="Jose J."/>
            <person name="Jangra R.K."/>
            <person name="Garforth S.J."/>
            <person name="Du Q."/>
            <person name="Cahill S.M."/>
            <person name="Dulyaninova N.G."/>
            <person name="Love J.D."/>
            <person name="Chandran K."/>
            <person name="Bresnick A.R."/>
            <person name="Cameron C.E."/>
            <person name="Almo S.C."/>
        </authorList>
    </citation>
    <scope>FUNCTION</scope>
    <scope>CATALYTIC ACTIVITY</scope>
</reference>
<reference key="23">
    <citation type="journal article" date="2018" name="Viruses">
        <title>Viperin Inhibits c Replication by Interacting with Viral 2C Protein.</title>
        <authorList>
            <person name="Wei C."/>
            <person name="Zheng C."/>
            <person name="Sun J."/>
            <person name="Luo D."/>
            <person name="Tang Y."/>
            <person name="Zhang Y."/>
            <person name="Ke X."/>
            <person name="Liu Y."/>
            <person name="Zheng Z."/>
            <person name="Wang H."/>
        </authorList>
    </citation>
    <scope>FUNCTION</scope>
    <scope>INTERACTION WITH ENTEROVIRUS A71 PROTEIN 2C (MICROBIAL INFECTION)</scope>
    <scope>SUBCELLULAR LOCATION</scope>
</reference>
<reference key="24">
    <citation type="journal article" date="2019" name="Front. Immunol.">
        <title>The Interaction Mechanism Between Herpes Simplex Virus 1 Glycoprotein D and Host Antiviral Protein Viperin.</title>
        <authorList>
            <person name="Li M."/>
            <person name="Liao Z."/>
            <person name="Xu Z."/>
            <person name="Zou X."/>
            <person name="Wang Y."/>
            <person name="Peng H."/>
            <person name="Li Y."/>
            <person name="Ou X."/>
            <person name="Deng Y."/>
            <person name="Guo Y."/>
            <person name="Gan W."/>
            <person name="Peng T."/>
            <person name="Chen D."/>
            <person name="Cai M."/>
        </authorList>
    </citation>
    <scope>FUNCTION</scope>
    <scope>INTERACTION WITH HERPES SIMPLEX VIRUS 1/HHV-1 GLYCOPROTEIN D (MICROBIAL INFECTION)</scope>
    <scope>SUBCELLULAR LOCATION</scope>
    <scope>INTERACTION WITH TRAF6 AND IRAK1</scope>
</reference>
<reference key="25">
    <citation type="journal article" date="2019" name="J. Biol. Chem.">
        <title>Viperin interacts with the kinase IRAK1 and the E3 ubiquitin ligase TRAF6, coupling innate immune signaling to antiviral ribonucleotide synthesis.</title>
        <authorList>
            <person name="Dumbrepatil A.B."/>
            <person name="Ghosh S."/>
            <person name="Zegalia K.A."/>
            <person name="Malec P.A."/>
            <person name="Hoff J.D."/>
            <person name="Kennedy R.T."/>
            <person name="Marsh E.N.G."/>
        </authorList>
    </citation>
    <scope>FUNCTION</scope>
    <scope>INTERACTION WITH IRAK1 AND TRAF6</scope>
    <scope>ACTIVITY REGULATION</scope>
    <scope>CATALYTIC ACTIVITY</scope>
</reference>
<reference key="26">
    <citation type="journal article" date="2019" name="Int. J. Mol. Sci.">
        <title>A Viperin Mutant Bearing the K358R Substitution Lost its Anti-ZIKA Virus Activity.</title>
        <authorList>
            <person name="Vanwalscappel B."/>
            <person name="Gadea G."/>
            <person name="Despres P."/>
        </authorList>
    </citation>
    <scope>FUNCTION</scope>
    <scope>MUTAGENESIS OF LYS-358</scope>
</reference>
<reference key="27">
    <citation type="journal article" date="2020" name="Mol. Cell">
        <title>Targeting UBE4A Revives Viperin Protein in Epithelium to Enhance Host Antiviral Defense.</title>
        <authorList>
            <person name="Yuan Y."/>
            <person name="Miao Y."/>
            <person name="Qian L."/>
            <person name="Zhang Y."/>
            <person name="Liu C."/>
            <person name="Liu J."/>
            <person name="Zuo Y."/>
            <person name="Feng Q."/>
            <person name="Guo T."/>
            <person name="Zhang L."/>
            <person name="Chen X."/>
            <person name="Jin L."/>
            <person name="Huang F."/>
            <person name="Zhang H."/>
            <person name="Zhang W."/>
            <person name="Li W."/>
            <person name="Xu G."/>
            <person name="Zheng H."/>
        </authorList>
    </citation>
    <scope>FUNCTION</scope>
    <scope>ACETYLATION AT LYS-197</scope>
    <scope>UBIQUITINATION AT LYS-206</scope>
    <scope>MUTAGENESIS OF LYS-197 AND LYS-206</scope>
</reference>
<reference key="28">
    <citation type="journal article" date="2022" name="Front. Mol. Biosci.">
        <title>Radical-SAM dependent nucleotide dehydratase (SAND), rectification of the names of an ancient iron-sulfur enzyme using NC-IUBMB recommendations.</title>
        <authorList>
            <person name="Ji Y."/>
            <person name="Wei L."/>
            <person name="Da A."/>
            <person name="Stark H."/>
            <person name="Hagedoorn P.-L."/>
            <person name="Ciofi-Baffoni S."/>
            <person name="Cowley S.A."/>
            <person name="Louro R.O."/>
            <person name="Todorovic S."/>
            <person name="Mroginski M.A."/>
            <person name="Nicolet Y."/>
            <person name="Roessler M.M."/>
            <person name="Le Brun N.E."/>
            <person name="Piccioli M."/>
            <person name="James W.S."/>
            <person name="Hagen W.R."/>
            <person name="Ebrahimi K.H."/>
        </authorList>
    </citation>
    <scope>NOMENCLATURE</scope>
</reference>
<reference key="29">
    <citation type="journal article" date="2010" name="Biochem. Biophys. Res. Commun.">
        <title>Structural characterization reveals that viperin is a radical S-adenosyl-L-methionine (SAM) enzyme.</title>
        <authorList>
            <person name="Shaveta G."/>
            <person name="Shi J."/>
            <person name="Chow V.T."/>
            <person name="Song J."/>
        </authorList>
    </citation>
    <scope>STRUCTURE BY NMR OF 45-361</scope>
    <scope>IDENTIFICATION BY MASS SPECTROMETRY</scope>
    <scope>COFACTOR</scope>
</reference>
<dbReference type="EC" id="4.2.-.-" evidence="17 19"/>
<dbReference type="EMBL" id="AF026941">
    <property type="status" value="NOT_ANNOTATED_CDS"/>
    <property type="molecule type" value="mRNA"/>
</dbReference>
<dbReference type="EMBL" id="AF442151">
    <property type="protein sequence ID" value="AAL50053.1"/>
    <property type="molecule type" value="mRNA"/>
</dbReference>
<dbReference type="EMBL" id="AC017076">
    <property type="protein sequence ID" value="AAY14802.1"/>
    <property type="molecule type" value="Genomic_DNA"/>
</dbReference>
<dbReference type="EMBL" id="CH471053">
    <property type="protein sequence ID" value="EAX01034.1"/>
    <property type="molecule type" value="Genomic_DNA"/>
</dbReference>
<dbReference type="EMBL" id="BC017969">
    <property type="protein sequence ID" value="AAH17969.1"/>
    <property type="molecule type" value="mRNA"/>
</dbReference>
<dbReference type="CCDS" id="CCDS1656.1"/>
<dbReference type="RefSeq" id="NP_542388.2">
    <property type="nucleotide sequence ID" value="NM_080657.4"/>
</dbReference>
<dbReference type="RefSeq" id="XP_011508716.1">
    <property type="nucleotide sequence ID" value="XM_011510414.2"/>
</dbReference>
<dbReference type="RefSeq" id="XP_054200478.1">
    <property type="nucleotide sequence ID" value="XM_054344503.1"/>
</dbReference>
<dbReference type="SMR" id="Q8WXG1"/>
<dbReference type="BioGRID" id="124843">
    <property type="interactions" value="27"/>
</dbReference>
<dbReference type="FunCoup" id="Q8WXG1">
    <property type="interactions" value="310"/>
</dbReference>
<dbReference type="IntAct" id="Q8WXG1">
    <property type="interactions" value="13"/>
</dbReference>
<dbReference type="STRING" id="9606.ENSP00000371471"/>
<dbReference type="iPTMnet" id="Q8WXG1"/>
<dbReference type="PhosphoSitePlus" id="Q8WXG1"/>
<dbReference type="BioMuta" id="RSAD2"/>
<dbReference type="DMDM" id="74724033"/>
<dbReference type="jPOST" id="Q8WXG1"/>
<dbReference type="MassIVE" id="Q8WXG1"/>
<dbReference type="PaxDb" id="9606-ENSP00000371471"/>
<dbReference type="PeptideAtlas" id="Q8WXG1"/>
<dbReference type="ProteomicsDB" id="75031"/>
<dbReference type="Antibodypedia" id="12336">
    <property type="antibodies" value="206 antibodies from 32 providers"/>
</dbReference>
<dbReference type="DNASU" id="91543"/>
<dbReference type="Ensembl" id="ENST00000382040.4">
    <property type="protein sequence ID" value="ENSP00000371471.3"/>
    <property type="gene ID" value="ENSG00000134321.13"/>
</dbReference>
<dbReference type="Ensembl" id="ENST00000680607.1">
    <property type="protein sequence ID" value="ENSP00000506390.1"/>
    <property type="gene ID" value="ENSG00000134321.13"/>
</dbReference>
<dbReference type="GeneID" id="91543"/>
<dbReference type="KEGG" id="hsa:91543"/>
<dbReference type="MANE-Select" id="ENST00000382040.4">
    <property type="protein sequence ID" value="ENSP00000371471.3"/>
    <property type="RefSeq nucleotide sequence ID" value="NM_080657.5"/>
    <property type="RefSeq protein sequence ID" value="NP_542388.2"/>
</dbReference>
<dbReference type="UCSC" id="uc002qyp.2">
    <property type="organism name" value="human"/>
</dbReference>
<dbReference type="AGR" id="HGNC:30908"/>
<dbReference type="CTD" id="91543"/>
<dbReference type="DisGeNET" id="91543"/>
<dbReference type="GeneCards" id="RSAD2"/>
<dbReference type="HGNC" id="HGNC:30908">
    <property type="gene designation" value="RSAD2"/>
</dbReference>
<dbReference type="HPA" id="ENSG00000134321">
    <property type="expression patterns" value="Tissue enhanced (salivary)"/>
</dbReference>
<dbReference type="MIM" id="607810">
    <property type="type" value="gene"/>
</dbReference>
<dbReference type="neXtProt" id="NX_Q8WXG1"/>
<dbReference type="OpenTargets" id="ENSG00000134321"/>
<dbReference type="PharmGKB" id="PA134937442"/>
<dbReference type="VEuPathDB" id="HostDB:ENSG00000134321"/>
<dbReference type="eggNOG" id="ENOG502QQMH">
    <property type="taxonomic scope" value="Eukaryota"/>
</dbReference>
<dbReference type="GeneTree" id="ENSGT00390000013670"/>
<dbReference type="HOGENOM" id="CLU_049058_2_1_1"/>
<dbReference type="InParanoid" id="Q8WXG1"/>
<dbReference type="OMA" id="ERWFKKY"/>
<dbReference type="OrthoDB" id="549750at2759"/>
<dbReference type="PAN-GO" id="Q8WXG1">
    <property type="GO annotations" value="5 GO annotations based on evolutionary models"/>
</dbReference>
<dbReference type="PhylomeDB" id="Q8WXG1"/>
<dbReference type="TreeFam" id="TF300085"/>
<dbReference type="PathwayCommons" id="Q8WXG1"/>
<dbReference type="Reactome" id="R-HSA-909733">
    <property type="pathway name" value="Interferon alpha/beta signaling"/>
</dbReference>
<dbReference type="SignaLink" id="Q8WXG1"/>
<dbReference type="SIGNOR" id="Q8WXG1"/>
<dbReference type="BioGRID-ORCS" id="91543">
    <property type="hits" value="6 hits in 1148 CRISPR screens"/>
</dbReference>
<dbReference type="ChiTaRS" id="RSAD2">
    <property type="organism name" value="human"/>
</dbReference>
<dbReference type="GenomeRNAi" id="91543"/>
<dbReference type="Pharos" id="Q8WXG1">
    <property type="development level" value="Tbio"/>
</dbReference>
<dbReference type="PRO" id="PR:Q8WXG1"/>
<dbReference type="Proteomes" id="UP000005640">
    <property type="component" value="Chromosome 2"/>
</dbReference>
<dbReference type="RNAct" id="Q8WXG1">
    <property type="molecule type" value="protein"/>
</dbReference>
<dbReference type="Bgee" id="ENSG00000134321">
    <property type="expression patterns" value="Expressed in buccal mucosa cell and 188 other cell types or tissues"/>
</dbReference>
<dbReference type="ExpressionAtlas" id="Q8WXG1">
    <property type="expression patterns" value="baseline and differential"/>
</dbReference>
<dbReference type="GO" id="GO:0005783">
    <property type="term" value="C:endoplasmic reticulum"/>
    <property type="evidence" value="ECO:0000314"/>
    <property type="project" value="UniProtKB"/>
</dbReference>
<dbReference type="GO" id="GO:0005789">
    <property type="term" value="C:endoplasmic reticulum membrane"/>
    <property type="evidence" value="ECO:0000314"/>
    <property type="project" value="UniProtKB"/>
</dbReference>
<dbReference type="GO" id="GO:0001650">
    <property type="term" value="C:fibrillar center"/>
    <property type="evidence" value="ECO:0000314"/>
    <property type="project" value="HPA"/>
</dbReference>
<dbReference type="GO" id="GO:0005794">
    <property type="term" value="C:Golgi apparatus"/>
    <property type="evidence" value="ECO:0007669"/>
    <property type="project" value="UniProtKB-SubCell"/>
</dbReference>
<dbReference type="GO" id="GO:0005811">
    <property type="term" value="C:lipid droplet"/>
    <property type="evidence" value="ECO:0000250"/>
    <property type="project" value="UniProtKB"/>
</dbReference>
<dbReference type="GO" id="GO:0005743">
    <property type="term" value="C:mitochondrial inner membrane"/>
    <property type="evidence" value="ECO:0000314"/>
    <property type="project" value="UniProtKB"/>
</dbReference>
<dbReference type="GO" id="GO:0005741">
    <property type="term" value="C:mitochondrial outer membrane"/>
    <property type="evidence" value="ECO:0000314"/>
    <property type="project" value="UniProtKB"/>
</dbReference>
<dbReference type="GO" id="GO:0005739">
    <property type="term" value="C:mitochondrion"/>
    <property type="evidence" value="ECO:0000314"/>
    <property type="project" value="UniProtKB"/>
</dbReference>
<dbReference type="GO" id="GO:0051539">
    <property type="term" value="F:4 iron, 4 sulfur cluster binding"/>
    <property type="evidence" value="ECO:0000314"/>
    <property type="project" value="UniProtKB"/>
</dbReference>
<dbReference type="GO" id="GO:0016829">
    <property type="term" value="F:lyase activity"/>
    <property type="evidence" value="ECO:0007669"/>
    <property type="project" value="UniProtKB-KW"/>
</dbReference>
<dbReference type="GO" id="GO:0046872">
    <property type="term" value="F:metal ion binding"/>
    <property type="evidence" value="ECO:0007669"/>
    <property type="project" value="UniProtKB-KW"/>
</dbReference>
<dbReference type="GO" id="GO:0035710">
    <property type="term" value="P:CD4-positive, alpha-beta T cell activation"/>
    <property type="evidence" value="ECO:0000250"/>
    <property type="project" value="UniProtKB"/>
</dbReference>
<dbReference type="GO" id="GO:0043367">
    <property type="term" value="P:CD4-positive, alpha-beta T cell differentiation"/>
    <property type="evidence" value="ECO:0000250"/>
    <property type="project" value="UniProtKB"/>
</dbReference>
<dbReference type="GO" id="GO:0051607">
    <property type="term" value="P:defense response to virus"/>
    <property type="evidence" value="ECO:0000314"/>
    <property type="project" value="UniProtKB"/>
</dbReference>
<dbReference type="GO" id="GO:0045087">
    <property type="term" value="P:innate immune response"/>
    <property type="evidence" value="ECO:0007669"/>
    <property type="project" value="UniProtKB-KW"/>
</dbReference>
<dbReference type="GO" id="GO:0050709">
    <property type="term" value="P:negative regulation of protein secretion"/>
    <property type="evidence" value="ECO:0000314"/>
    <property type="project" value="UniProtKB"/>
</dbReference>
<dbReference type="GO" id="GO:0045071">
    <property type="term" value="P:negative regulation of viral genome replication"/>
    <property type="evidence" value="ECO:0000314"/>
    <property type="project" value="UniProtKB"/>
</dbReference>
<dbReference type="GO" id="GO:0050778">
    <property type="term" value="P:positive regulation of immune response"/>
    <property type="evidence" value="ECO:0000318"/>
    <property type="project" value="GO_Central"/>
</dbReference>
<dbReference type="GO" id="GO:2000553">
    <property type="term" value="P:positive regulation of T-helper 2 cell cytokine production"/>
    <property type="evidence" value="ECO:0000250"/>
    <property type="project" value="UniProtKB"/>
</dbReference>
<dbReference type="GO" id="GO:0034157">
    <property type="term" value="P:positive regulation of toll-like receptor 7 signaling pathway"/>
    <property type="evidence" value="ECO:0000250"/>
    <property type="project" value="UniProtKB"/>
</dbReference>
<dbReference type="GO" id="GO:0034165">
    <property type="term" value="P:positive regulation of toll-like receptor 9 signaling pathway"/>
    <property type="evidence" value="ECO:0000250"/>
    <property type="project" value="UniProtKB"/>
</dbReference>
<dbReference type="GO" id="GO:0009615">
    <property type="term" value="P:response to virus"/>
    <property type="evidence" value="ECO:0000314"/>
    <property type="project" value="UniProtKB"/>
</dbReference>
<dbReference type="CDD" id="cd01335">
    <property type="entry name" value="Radical_SAM"/>
    <property type="match status" value="1"/>
</dbReference>
<dbReference type="FunFam" id="3.20.20.70:FF:000152">
    <property type="entry name" value="radical S-adenosyl methionine domain-containing protein 2"/>
    <property type="match status" value="1"/>
</dbReference>
<dbReference type="Gene3D" id="3.20.20.70">
    <property type="entry name" value="Aldolase class I"/>
    <property type="match status" value="1"/>
</dbReference>
<dbReference type="InterPro" id="IPR013785">
    <property type="entry name" value="Aldolase_TIM"/>
</dbReference>
<dbReference type="InterPro" id="IPR006638">
    <property type="entry name" value="Elp3/MiaA/NifB-like_rSAM"/>
</dbReference>
<dbReference type="InterPro" id="IPR026372">
    <property type="entry name" value="RSAD2"/>
</dbReference>
<dbReference type="InterPro" id="IPR051196">
    <property type="entry name" value="RSAD2/Viperin_antiviral"/>
</dbReference>
<dbReference type="InterPro" id="IPR007197">
    <property type="entry name" value="rSAM"/>
</dbReference>
<dbReference type="NCBIfam" id="TIGR04278">
    <property type="entry name" value="viperin"/>
    <property type="match status" value="1"/>
</dbReference>
<dbReference type="NCBIfam" id="NF038283">
    <property type="entry name" value="viperin_w_prok"/>
    <property type="match status" value="1"/>
</dbReference>
<dbReference type="PANTHER" id="PTHR21339">
    <property type="entry name" value="RADICAL S-ADENOSYL METHIONINE DOMAIN-CONTAINING PROTEIN 2"/>
    <property type="match status" value="1"/>
</dbReference>
<dbReference type="PANTHER" id="PTHR21339:SF0">
    <property type="entry name" value="S-ADENOSYLMETHIONINE-DEPENDENT NUCLEOTIDE DEHYDRATASE RSAD2"/>
    <property type="match status" value="1"/>
</dbReference>
<dbReference type="Pfam" id="PF13353">
    <property type="entry name" value="Fer4_12"/>
    <property type="match status" value="1"/>
</dbReference>
<dbReference type="Pfam" id="PF04055">
    <property type="entry name" value="Radical_SAM"/>
    <property type="match status" value="1"/>
</dbReference>
<dbReference type="SFLD" id="SFLDG01088">
    <property type="entry name" value="antiviral_proteins"/>
    <property type="match status" value="1"/>
</dbReference>
<dbReference type="SFLD" id="SFLDG01067">
    <property type="entry name" value="SPASM/twitch_domain_containing"/>
    <property type="match status" value="1"/>
</dbReference>
<dbReference type="SFLD" id="SFLDF00318">
    <property type="entry name" value="Viperin"/>
    <property type="match status" value="1"/>
</dbReference>
<dbReference type="SMART" id="SM00729">
    <property type="entry name" value="Elp3"/>
    <property type="match status" value="1"/>
</dbReference>
<dbReference type="SUPFAM" id="SSF102114">
    <property type="entry name" value="Radical SAM enzymes"/>
    <property type="match status" value="1"/>
</dbReference>
<dbReference type="PROSITE" id="PS51918">
    <property type="entry name" value="RADICAL_SAM"/>
    <property type="match status" value="1"/>
</dbReference>
<comment type="function">
    <text evidence="2 4 7 8 9 11 17 18 19 20 21 22">Interferon-inducible antiviral protein which plays a major role in the cell antiviral state induced by type I and type II interferon (PubMed:31812350). Catalyzes the conversion of cytidine triphosphate (CTP) to 3'-deoxy-3',4'-didehydro-CTP (ddhCTP) via a SAM-dependent radical mechanism (PubMed:29925952, PubMed:30872404). In turn, ddhCTP acts as a chain terminator for the RNA-dependent RNA polymerases from multiple viruses and directly inhibits viral replication (PubMed:29925952). Therefore, inhibits a wide range of DNA and RNA viruses, including human cytomegalovirus (HCMV), hepatitis C virus (HCV), west Nile virus (WNV), dengue virus, sindbis virus, influenza A virus, sendai virus, vesicular stomatitis virus (VSV), zika virus, and human immunodeficiency virus (HIV-1) (PubMed:29925952, PubMed:30587778, PubMed:30934824, PubMed:31921110). Also promotes TLR7 and TLR9-dependent production of IFN-beta production in plasmacytoid dendritic cells (pDCs) by facilitating 'Lys-63'-linked ubiquitination of IRAK1 by TRAF6 (PubMed:30872404). Plays a role in CD4+ T-cells activation and differentiation. Facilitates T-cell receptor (TCR)-mediated GATA3 activation and optimal T-helper 2 (Th2) cytokine production by modulating NFKB1 and JUNB activities. Can inhibit secretion of soluble proteins.</text>
</comment>
<comment type="catalytic activity">
    <reaction evidence="17 19">
        <text>CTP + AH2 + S-adenosyl-L-methionine = 3'-deoxy-3',4'-didehydro-CTP + 5'-deoxyadenosine + L-methionine + A + H2O + H(+)</text>
        <dbReference type="Rhea" id="RHEA:65944"/>
        <dbReference type="ChEBI" id="CHEBI:13193"/>
        <dbReference type="ChEBI" id="CHEBI:15377"/>
        <dbReference type="ChEBI" id="CHEBI:15378"/>
        <dbReference type="ChEBI" id="CHEBI:17319"/>
        <dbReference type="ChEBI" id="CHEBI:17499"/>
        <dbReference type="ChEBI" id="CHEBI:37563"/>
        <dbReference type="ChEBI" id="CHEBI:57844"/>
        <dbReference type="ChEBI" id="CHEBI:59789"/>
        <dbReference type="ChEBI" id="CHEBI:166821"/>
    </reaction>
</comment>
<comment type="cofactor">
    <cofactor evidence="12 13 16">
        <name>[4Fe-4S] cluster</name>
        <dbReference type="ChEBI" id="CHEBI:49883"/>
    </cofactor>
    <text evidence="12 13 16">Binds 1 [4Fe-4S] cluster. The cluster is coordinated with 3 cysteines and an exchangeable S-adenosyl-L-methionine.</text>
</comment>
<comment type="activity regulation">
    <text evidence="19">IRAK1 and TRAF6 synergistically activate RSAD2 increasing its activity with CTP as substrate about 10-fold.</text>
</comment>
<comment type="subunit">
    <text evidence="10 14 15 19 22">Homodimer. Interacts with IRAK1 and TRAF6 (PubMed:30872404, PubMed:31921110). Interacts with FPPS (PubMed:18005724). Interacts with HADHB (PubMed:21527675). Interacts (via C-terminus) with VAPA/VAP33 (via C-terminus) (PubMed:21957124).</text>
</comment>
<comment type="subunit">
    <text evidence="14">(Microbial infection) Interacts with human cytomegalovirus/HHV-5 protein vMIA/UL37; this interaction results in RSAD2/viperin relocalization from the endoplasmic reticulum to the mitochondria.</text>
</comment>
<comment type="subunit">
    <text evidence="18">(Microbial infection) Interacts (via N-terminus) with enterovirus A71 protein 2C; this interaction inhibits viral replication.</text>
</comment>
<comment type="subunit">
    <text evidence="22">(Microbial infection) Interacts with herpes simplex virus 1/HHV-1 glycoprotein D; this interaction inhibits HHV-1 replication by facilitating IRF7-mediated IFN-beta production.</text>
</comment>
<comment type="interaction">
    <interactant intactId="EBI-12736320">
        <id>Q8WXG1</id>
    </interactant>
    <interactant intactId="EBI-1220105">
        <id>P02654</id>
        <label>APOC1</label>
    </interactant>
    <organismsDiffer>false</organismsDiffer>
    <experiments>3</experiments>
</comment>
<comment type="interaction">
    <interactant intactId="EBI-12736320">
        <id>Q8WXG1</id>
    </interactant>
    <interactant intactId="EBI-18302142">
        <id>P55056</id>
        <label>APOC4</label>
    </interactant>
    <organismsDiffer>false</organismsDiffer>
    <experiments>3</experiments>
</comment>
<comment type="interaction">
    <interactant intactId="EBI-12736320">
        <id>Q8WXG1</id>
    </interactant>
    <interactant intactId="EBI-725145">
        <id>O76071</id>
        <label>CIAO1</label>
    </interactant>
    <organismsDiffer>false</organismsDiffer>
    <experiments>2</experiments>
</comment>
<comment type="interaction">
    <interactant intactId="EBI-12736320">
        <id>Q8WXG1</id>
    </interactant>
    <interactant intactId="EBI-17589229">
        <id>Q6NTF9-3</id>
        <label>RHBDD2</label>
    </interactant>
    <organismsDiffer>false</organismsDiffer>
    <experiments>3</experiments>
</comment>
<comment type="interaction">
    <interactant intactId="EBI-12736320">
        <id>Q8WXG1</id>
    </interactant>
    <interactant intactId="EBI-1059156">
        <id>Q9P0L0</id>
        <label>VAPA</label>
    </interactant>
    <organismsDiffer>false</organismsDiffer>
    <experiments>10</experiments>
</comment>
<comment type="subcellular location">
    <subcellularLocation>
        <location>Endoplasmic reticulum membrane</location>
        <topology>Peripheral membrane protein</topology>
        <orientation>Cytoplasmic side</orientation>
    </subcellularLocation>
    <subcellularLocation>
        <location evidence="2 7 22">Golgi apparatus</location>
    </subcellularLocation>
    <subcellularLocation>
        <location evidence="2 7 18">Endoplasmic reticulum</location>
    </subcellularLocation>
    <subcellularLocation>
        <location evidence="22">Lipid droplet</location>
    </subcellularLocation>
    <subcellularLocation>
        <location>Mitochondrion</location>
    </subcellularLocation>
    <subcellularLocation>
        <location>Mitochondrion inner membrane</location>
    </subcellularLocation>
    <subcellularLocation>
        <location>Mitochondrion outer membrane</location>
    </subcellularLocation>
    <text>Infection with human cytomegalovirus (HCMV) causes relocation to the Golgi apparatus and to cytoplasmic vacuoles which also contain HCMV proteins glycoprotein B and pp28. Interaction with human cytomegalovirus/HHV-5 protein vMIA/UL37 results in its relocalization from the endoplasmic reticulum to the mitochondria.</text>
</comment>
<comment type="induction">
    <text evidence="2 4 5 6 23">By interferon type I, type II and bacterial lipopolysaccharides (LPS). Little or no induction by IFNG/IFN-gamma is observed in monocytic cell lines. Induced by infection with hepatitis C virus, yellow fever virus and Sendai virus, presumably through type I interferon pathway. Induction by infection with human cytomegalovirus (HCMV), stomatitis virus (VSV), chikungunya virus (CHIKV), Japanese encephalitis virus (JEV) occurs independent of the IFN pathway.</text>
</comment>
<comment type="domain">
    <text>The N-terminal region (1-42) is necessary for its localization to the endoplasmic reticulum membrane and lipid droplet.</text>
</comment>
<comment type="PTM">
    <text evidence="21">Acetylated by HAT1. HAT1-mediated acetylation of Lys-197 in turn recruits UBE4A that stimulates RSAD2 polyubiquitination leading to proteasomal degradation.</text>
</comment>
<comment type="PTM">
    <text evidence="21">'Lys-6'-linked polyubiquitination at Lys-206 leads to RSAD2 protein degradation.</text>
</comment>
<comment type="miscellaneous">
    <text>Up-regulated in atherosclerosis. Latent viruses like HCMV may be involved in atherogenesis by initiating local inflammation. This may induce up-regulation of antiviral gene RSAD2, which modulates lipids synthesis, and thus could play a role in abnormal lipid accumulation leading to atherosclerosis.</text>
</comment>
<comment type="similarity">
    <text evidence="29">Belongs to the radical SAM superfamily. RSAD2 family.</text>
</comment>
<accession>Q8WXG1</accession>
<accession>Q8WVI4</accession>
<feature type="chain" id="PRO_0000309583" description="S-adenosylmethionine-dependent nucleotide dehydratase RSAD2">
    <location>
        <begin position="1"/>
        <end position="361"/>
    </location>
</feature>
<feature type="domain" description="Radical SAM core" evidence="1">
    <location>
        <begin position="69"/>
        <end position="289"/>
    </location>
</feature>
<feature type="binding site" evidence="30">
    <location>
        <position position="83"/>
    </location>
    <ligand>
        <name>[4Fe-4S] cluster</name>
        <dbReference type="ChEBI" id="CHEBI:49883"/>
        <note>4Fe-4S-S-AdoMet</note>
    </ligand>
</feature>
<feature type="binding site" evidence="30">
    <location>
        <position position="87"/>
    </location>
    <ligand>
        <name>[4Fe-4S] cluster</name>
        <dbReference type="ChEBI" id="CHEBI:49883"/>
        <note>4Fe-4S-S-AdoMet</note>
    </ligand>
</feature>
<feature type="binding site" evidence="30">
    <location>
        <position position="90"/>
    </location>
    <ligand>
        <name>[4Fe-4S] cluster</name>
        <dbReference type="ChEBI" id="CHEBI:49883"/>
        <note>4Fe-4S-S-AdoMet</note>
    </ligand>
</feature>
<feature type="modified residue" description="N6-acetyllysine" evidence="21">
    <location>
        <position position="197"/>
    </location>
</feature>
<feature type="cross-link" description="Glycyl lysine isopeptide (Lys-Gly) (interchain with G-Cter in ubiquitin)" evidence="21">
    <location>
        <position position="206"/>
    </location>
</feature>
<feature type="sequence variant" id="VAR_036980" description="In dbSNP:rs17851586." evidence="3">
    <original>L</original>
    <variation>R</variation>
    <location>
        <position position="42"/>
    </location>
</feature>
<feature type="sequence variant" id="VAR_053974" description="In dbSNP:rs2305257.">
    <original>V</original>
    <variation>I</variation>
    <location>
        <position position="52"/>
    </location>
</feature>
<feature type="mutagenesis site" description="Loss of ability to assemble an Fe-S cluster and significant decrease in protein stability." evidence="16">
    <original>C</original>
    <variation>A</variation>
    <location>
        <position position="83"/>
    </location>
</feature>
<feature type="mutagenesis site" description="Loss of ability to assemble an Fe-S cluster and significant decrease in protein stability." evidence="16">
    <original>C</original>
    <variation>A</variation>
    <location>
        <position position="87"/>
    </location>
</feature>
<feature type="mutagenesis site" description="Loss of ability to assemble an Fe-S cluster and significant decrease in protein stability." evidence="16">
    <original>C</original>
    <variation>A</variation>
    <location>
        <position position="90"/>
    </location>
</feature>
<feature type="mutagenesis site" description="Loss of acetylation." evidence="21">
    <original>K</original>
    <variation>R</variation>
    <location>
        <position position="197"/>
    </location>
</feature>
<feature type="mutagenesis site" description="Loss of Lys-6-linked ubiquitination." evidence="21">
    <original>K</original>
    <variation>R</variation>
    <location>
        <position position="206"/>
    </location>
</feature>
<feature type="mutagenesis site" description="Complete loss of antiviral activity against Zika virus." evidence="20">
    <original>K</original>
    <variation>A</variation>
    <location>
        <position position="358"/>
    </location>
</feature>
<feature type="sequence conflict" description="In Ref. 1; AF026941." evidence="29" ref="1">
    <original>L</original>
    <variation>F</variation>
    <location>
        <position position="13"/>
    </location>
</feature>
<feature type="sequence conflict" description="In Ref. 1; AF026941." evidence="29" ref="1">
    <original>VA</original>
    <variation>IP</variation>
    <location>
        <begin position="216"/>
        <end position="217"/>
    </location>
</feature>
<proteinExistence type="evidence at protein level"/>
<sequence length="361" mass="42170">MWVLTPAAFAGKLLSVFRQPLSSLWRSLVPLFCWLRATFWLLATKRRKQQLVLRGPDETKEEEEDPPLPTTPTSVNYHFTRQCNYKCGFCFHTAKTSFVLPLEEAKRGLLLLKEAGMEKINFSGGEPFLQDRGEYLGKLVRFCKVELRLPSVSIVSNGSLIRERWFQNYGEYLDILAISCDSFDEEVNVLIGRGQGKKNHVENLQKLRRWCRDYRVAFKINSVINRFNVEEDMTEQIKALNPVRWKVFQCLLIEGENCGEDALREAERFVIGDEEFERFLERHKEVSCLVPESNQKMKDSYLILDEYMRFLNCRKGRKDPSKSILDVGVEEAIKFSGFDEKMFLKRGGKYIWSKADLKLDW</sequence>
<organism>
    <name type="scientific">Homo sapiens</name>
    <name type="common">Human</name>
    <dbReference type="NCBI Taxonomy" id="9606"/>
    <lineage>
        <taxon>Eukaryota</taxon>
        <taxon>Metazoa</taxon>
        <taxon>Chordata</taxon>
        <taxon>Craniata</taxon>
        <taxon>Vertebrata</taxon>
        <taxon>Euteleostomi</taxon>
        <taxon>Mammalia</taxon>
        <taxon>Eutheria</taxon>
        <taxon>Euarchontoglires</taxon>
        <taxon>Primates</taxon>
        <taxon>Haplorrhini</taxon>
        <taxon>Catarrhini</taxon>
        <taxon>Hominidae</taxon>
        <taxon>Homo</taxon>
    </lineage>
</organism>
<name>RSAD2_HUMAN</name>
<protein>
    <recommendedName>
        <fullName evidence="27">S-adenosylmethionine-dependent nucleotide dehydratase RSAD2</fullName>
        <shortName evidence="27">SAND</shortName>
        <ecNumber evidence="17 19">4.2.-.-</ecNumber>
    </recommendedName>
    <alternativeName>
        <fullName evidence="28">Cytomegalovirus-induced gene 5 protein</fullName>
    </alternativeName>
    <alternativeName>
        <fullName evidence="35">Radical S-adenosyl methionine domain-containing protein 2</fullName>
    </alternativeName>
    <alternativeName>
        <fullName evidence="24">Virus inhibitory protein, endoplasmic reticulum-associated, interferon-inducible</fullName>
        <shortName evidence="24 25 26">Viperin</shortName>
    </alternativeName>
</protein>